<keyword id="KW-0004">4Fe-4S</keyword>
<keyword id="KW-1003">Cell membrane</keyword>
<keyword id="KW-0408">Iron</keyword>
<keyword id="KW-0411">Iron-sulfur</keyword>
<keyword id="KW-0472">Membrane</keyword>
<keyword id="KW-0479">Metal-binding</keyword>
<keyword id="KW-0520">NAD</keyword>
<keyword id="KW-0874">Quinone</keyword>
<keyword id="KW-0677">Repeat</keyword>
<keyword id="KW-1278">Translocase</keyword>
<keyword id="KW-0830">Ubiquinone</keyword>
<protein>
    <recommendedName>
        <fullName evidence="1">NADH-quinone oxidoreductase subunit I</fullName>
        <ecNumber evidence="1">7.1.1.-</ecNumber>
    </recommendedName>
    <alternativeName>
        <fullName evidence="1">NADH dehydrogenase I subunit I</fullName>
    </alternativeName>
    <alternativeName>
        <fullName evidence="1">NDH-1 subunit I</fullName>
    </alternativeName>
</protein>
<reference key="1">
    <citation type="journal article" date="2002" name="Science">
        <title>50 million years of genomic stasis in endosymbiotic bacteria.</title>
        <authorList>
            <person name="Tamas I."/>
            <person name="Klasson L."/>
            <person name="Canbaeck B."/>
            <person name="Naeslund A.K."/>
            <person name="Eriksson A.-S."/>
            <person name="Wernegreen J.J."/>
            <person name="Sandstroem J.P."/>
            <person name="Moran N.A."/>
            <person name="Andersson S.G.E."/>
        </authorList>
    </citation>
    <scope>NUCLEOTIDE SEQUENCE [LARGE SCALE GENOMIC DNA]</scope>
    <source>
        <strain>Sg</strain>
    </source>
</reference>
<comment type="function">
    <text evidence="1">NDH-1 shuttles electrons from NADH, via FMN and iron-sulfur (Fe-S) centers, to quinones in the respiratory chain. The immediate electron acceptor for the enzyme in this species is believed to be ubiquinone. Couples the redox reaction to proton translocation (for every two electrons transferred, four hydrogen ions are translocated across the cytoplasmic membrane), and thus conserves the redox energy in a proton gradient.</text>
</comment>
<comment type="catalytic activity">
    <reaction evidence="1">
        <text>a quinone + NADH + 5 H(+)(in) = a quinol + NAD(+) + 4 H(+)(out)</text>
        <dbReference type="Rhea" id="RHEA:57888"/>
        <dbReference type="ChEBI" id="CHEBI:15378"/>
        <dbReference type="ChEBI" id="CHEBI:24646"/>
        <dbReference type="ChEBI" id="CHEBI:57540"/>
        <dbReference type="ChEBI" id="CHEBI:57945"/>
        <dbReference type="ChEBI" id="CHEBI:132124"/>
    </reaction>
</comment>
<comment type="cofactor">
    <cofactor evidence="1">
        <name>[4Fe-4S] cluster</name>
        <dbReference type="ChEBI" id="CHEBI:49883"/>
    </cofactor>
    <text evidence="1">Binds 2 [4Fe-4S] clusters per subunit.</text>
</comment>
<comment type="subunit">
    <text evidence="1">NDH-1 is composed of 13 different subunits. Subunits NuoA, H, J, K, L, M, N constitute the membrane sector of the complex.</text>
</comment>
<comment type="subcellular location">
    <subcellularLocation>
        <location evidence="1">Cell membrane</location>
        <topology evidence="1">Peripheral membrane protein</topology>
    </subcellularLocation>
</comment>
<comment type="similarity">
    <text evidence="1">Belongs to the complex I 23 kDa subunit family.</text>
</comment>
<organism>
    <name type="scientific">Buchnera aphidicola subsp. Schizaphis graminum (strain Sg)</name>
    <dbReference type="NCBI Taxonomy" id="198804"/>
    <lineage>
        <taxon>Bacteria</taxon>
        <taxon>Pseudomonadati</taxon>
        <taxon>Pseudomonadota</taxon>
        <taxon>Gammaproteobacteria</taxon>
        <taxon>Enterobacterales</taxon>
        <taxon>Erwiniaceae</taxon>
        <taxon>Buchnera</taxon>
    </lineage>
</organism>
<proteinExistence type="inferred from homology"/>
<evidence type="ECO:0000255" key="1">
    <source>
        <dbReference type="HAMAP-Rule" id="MF_01351"/>
    </source>
</evidence>
<feature type="chain" id="PRO_0000118727" description="NADH-quinone oxidoreductase subunit I">
    <location>
        <begin position="1"/>
        <end position="180"/>
    </location>
</feature>
<feature type="domain" description="4Fe-4S ferredoxin-type 1" evidence="1">
    <location>
        <begin position="50"/>
        <end position="80"/>
    </location>
</feature>
<feature type="domain" description="4Fe-4S ferredoxin-type 2" evidence="1">
    <location>
        <begin position="90"/>
        <end position="119"/>
    </location>
</feature>
<feature type="binding site" evidence="1">
    <location>
        <position position="60"/>
    </location>
    <ligand>
        <name>[4Fe-4S] cluster</name>
        <dbReference type="ChEBI" id="CHEBI:49883"/>
        <label>1</label>
    </ligand>
</feature>
<feature type="binding site" evidence="1">
    <location>
        <position position="63"/>
    </location>
    <ligand>
        <name>[4Fe-4S] cluster</name>
        <dbReference type="ChEBI" id="CHEBI:49883"/>
        <label>1</label>
    </ligand>
</feature>
<feature type="binding site" evidence="1">
    <location>
        <position position="66"/>
    </location>
    <ligand>
        <name>[4Fe-4S] cluster</name>
        <dbReference type="ChEBI" id="CHEBI:49883"/>
        <label>1</label>
    </ligand>
</feature>
<feature type="binding site" evidence="1">
    <location>
        <position position="70"/>
    </location>
    <ligand>
        <name>[4Fe-4S] cluster</name>
        <dbReference type="ChEBI" id="CHEBI:49883"/>
        <label>2</label>
    </ligand>
</feature>
<feature type="binding site" evidence="1">
    <location>
        <position position="99"/>
    </location>
    <ligand>
        <name>[4Fe-4S] cluster</name>
        <dbReference type="ChEBI" id="CHEBI:49883"/>
        <label>2</label>
    </ligand>
</feature>
<feature type="binding site" evidence="1">
    <location>
        <position position="102"/>
    </location>
    <ligand>
        <name>[4Fe-4S] cluster</name>
        <dbReference type="ChEBI" id="CHEBI:49883"/>
        <label>2</label>
    </ligand>
</feature>
<feature type="binding site" evidence="1">
    <location>
        <position position="105"/>
    </location>
    <ligand>
        <name>[4Fe-4S] cluster</name>
        <dbReference type="ChEBI" id="CHEBI:49883"/>
        <label>2</label>
    </ligand>
</feature>
<feature type="binding site" evidence="1">
    <location>
        <position position="109"/>
    </location>
    <ligand>
        <name>[4Fe-4S] cluster</name>
        <dbReference type="ChEBI" id="CHEBI:49883"/>
        <label>1</label>
    </ligand>
</feature>
<sequence>MTVKEIIIGFLLQIRSILMVFKNIFSKSETKMYPEEKLYLSPRYRGRVILTRNIDGGERCVACNLCAVVCPVDCISLQKSEKKNGRWYPKFFRINFSRCIFCGLCEEACPTAAIQLMPDFELSDFNRQNLVYEKEDLLISGPGKYPDYDFYRFSGVVIKDKKVDKLEGQLKPVNVKDLLP</sequence>
<accession>Q8K9Y0</accession>
<name>NUOI_BUCAP</name>
<dbReference type="EC" id="7.1.1.-" evidence="1"/>
<dbReference type="EMBL" id="AE013218">
    <property type="protein sequence ID" value="AAM67722.1"/>
    <property type="molecule type" value="Genomic_DNA"/>
</dbReference>
<dbReference type="RefSeq" id="WP_011053689.1">
    <property type="nucleotide sequence ID" value="NC_004061.1"/>
</dbReference>
<dbReference type="SMR" id="Q8K9Y0"/>
<dbReference type="STRING" id="198804.BUsg_154"/>
<dbReference type="GeneID" id="93003624"/>
<dbReference type="KEGG" id="bas:BUsg_154"/>
<dbReference type="eggNOG" id="COG1143">
    <property type="taxonomic scope" value="Bacteria"/>
</dbReference>
<dbReference type="HOGENOM" id="CLU_067218_4_3_6"/>
<dbReference type="Proteomes" id="UP000000416">
    <property type="component" value="Chromosome"/>
</dbReference>
<dbReference type="GO" id="GO:0005886">
    <property type="term" value="C:plasma membrane"/>
    <property type="evidence" value="ECO:0007669"/>
    <property type="project" value="UniProtKB-SubCell"/>
</dbReference>
<dbReference type="GO" id="GO:0051539">
    <property type="term" value="F:4 iron, 4 sulfur cluster binding"/>
    <property type="evidence" value="ECO:0007669"/>
    <property type="project" value="UniProtKB-KW"/>
</dbReference>
<dbReference type="GO" id="GO:0005506">
    <property type="term" value="F:iron ion binding"/>
    <property type="evidence" value="ECO:0007669"/>
    <property type="project" value="UniProtKB-UniRule"/>
</dbReference>
<dbReference type="GO" id="GO:0050136">
    <property type="term" value="F:NADH:ubiquinone reductase (non-electrogenic) activity"/>
    <property type="evidence" value="ECO:0007669"/>
    <property type="project" value="UniProtKB-UniRule"/>
</dbReference>
<dbReference type="GO" id="GO:0048038">
    <property type="term" value="F:quinone binding"/>
    <property type="evidence" value="ECO:0007669"/>
    <property type="project" value="UniProtKB-KW"/>
</dbReference>
<dbReference type="GO" id="GO:0009060">
    <property type="term" value="P:aerobic respiration"/>
    <property type="evidence" value="ECO:0007669"/>
    <property type="project" value="TreeGrafter"/>
</dbReference>
<dbReference type="FunFam" id="3.30.70.3270:FF:000002">
    <property type="entry name" value="NADH-quinone oxidoreductase subunit I"/>
    <property type="match status" value="1"/>
</dbReference>
<dbReference type="Gene3D" id="3.30.70.3270">
    <property type="match status" value="1"/>
</dbReference>
<dbReference type="HAMAP" id="MF_01351">
    <property type="entry name" value="NDH1_NuoI"/>
    <property type="match status" value="1"/>
</dbReference>
<dbReference type="InterPro" id="IPR017896">
    <property type="entry name" value="4Fe4S_Fe-S-bd"/>
</dbReference>
<dbReference type="InterPro" id="IPR017900">
    <property type="entry name" value="4Fe4S_Fe_S_CS"/>
</dbReference>
<dbReference type="InterPro" id="IPR010226">
    <property type="entry name" value="NADH_quinone_OxRdtase_chainI"/>
</dbReference>
<dbReference type="NCBIfam" id="TIGR01971">
    <property type="entry name" value="NuoI"/>
    <property type="match status" value="1"/>
</dbReference>
<dbReference type="NCBIfam" id="NF004536">
    <property type="entry name" value="PRK05888.1-1"/>
    <property type="match status" value="1"/>
</dbReference>
<dbReference type="PANTHER" id="PTHR10849:SF20">
    <property type="entry name" value="NADH DEHYDROGENASE [UBIQUINONE] IRON-SULFUR PROTEIN 8, MITOCHONDRIAL"/>
    <property type="match status" value="1"/>
</dbReference>
<dbReference type="PANTHER" id="PTHR10849">
    <property type="entry name" value="NADH DEHYDROGENASE UBIQUINONE IRON-SULFUR PROTEIN 8, MITOCHONDRIAL"/>
    <property type="match status" value="1"/>
</dbReference>
<dbReference type="Pfam" id="PF12838">
    <property type="entry name" value="Fer4_7"/>
    <property type="match status" value="1"/>
</dbReference>
<dbReference type="SUPFAM" id="SSF54862">
    <property type="entry name" value="4Fe-4S ferredoxins"/>
    <property type="match status" value="1"/>
</dbReference>
<dbReference type="PROSITE" id="PS00198">
    <property type="entry name" value="4FE4S_FER_1"/>
    <property type="match status" value="2"/>
</dbReference>
<dbReference type="PROSITE" id="PS51379">
    <property type="entry name" value="4FE4S_FER_2"/>
    <property type="match status" value="2"/>
</dbReference>
<gene>
    <name evidence="1" type="primary">nuoI</name>
    <name type="ordered locus">BUsg_154</name>
</gene>